<protein>
    <recommendedName>
        <fullName>Phosphate propanoyltransferase</fullName>
        <ecNumber>2.3.1.222</ecNumber>
    </recommendedName>
    <alternativeName>
        <fullName>Phosphate acyltransferase PduL</fullName>
    </alternativeName>
    <alternativeName>
        <fullName>Phosphotransacylase PduL</fullName>
        <shortName>PTAC</shortName>
    </alternativeName>
    <alternativeName>
        <fullName>Propanediol utilization protein PduL</fullName>
    </alternativeName>
</protein>
<organism>
    <name type="scientific">Alkaliphilus metalliredigens (strain QYMF)</name>
    <dbReference type="NCBI Taxonomy" id="293826"/>
    <lineage>
        <taxon>Bacteria</taxon>
        <taxon>Bacillati</taxon>
        <taxon>Bacillota</taxon>
        <taxon>Clostridia</taxon>
        <taxon>Peptostreptococcales</taxon>
        <taxon>Natronincolaceae</taxon>
        <taxon>Alkaliphilus</taxon>
    </lineage>
</organism>
<accession>A6TJX7</accession>
<proteinExistence type="inferred from homology"/>
<dbReference type="EC" id="2.3.1.222"/>
<dbReference type="EMBL" id="CP000724">
    <property type="protein sequence ID" value="ABR46495.1"/>
    <property type="molecule type" value="Genomic_DNA"/>
</dbReference>
<dbReference type="RefSeq" id="WP_011971404.1">
    <property type="nucleotide sequence ID" value="NC_009633.1"/>
</dbReference>
<dbReference type="SMR" id="A6TJX7"/>
<dbReference type="STRING" id="293826.Amet_0262"/>
<dbReference type="KEGG" id="amt:Amet_0262"/>
<dbReference type="eggNOG" id="COG4869">
    <property type="taxonomic scope" value="Bacteria"/>
</dbReference>
<dbReference type="HOGENOM" id="CLU_080676_1_0_9"/>
<dbReference type="OrthoDB" id="9784365at2"/>
<dbReference type="UniPathway" id="UPA00621"/>
<dbReference type="Proteomes" id="UP000001572">
    <property type="component" value="Chromosome"/>
</dbReference>
<dbReference type="GO" id="GO:0031469">
    <property type="term" value="C:bacterial microcompartment"/>
    <property type="evidence" value="ECO:0007669"/>
    <property type="project" value="UniProtKB-SubCell"/>
</dbReference>
<dbReference type="GO" id="GO:0016747">
    <property type="term" value="F:acyltransferase activity, transferring groups other than amino-acyl groups"/>
    <property type="evidence" value="ECO:0007669"/>
    <property type="project" value="InterPro"/>
</dbReference>
<dbReference type="GO" id="GO:0046872">
    <property type="term" value="F:metal ion binding"/>
    <property type="evidence" value="ECO:0007669"/>
    <property type="project" value="UniProtKB-KW"/>
</dbReference>
<dbReference type="GO" id="GO:0051144">
    <property type="term" value="P:propanediol catabolic process"/>
    <property type="evidence" value="ECO:0007669"/>
    <property type="project" value="UniProtKB-UniPathway"/>
</dbReference>
<dbReference type="InterPro" id="IPR008300">
    <property type="entry name" value="PTAC"/>
</dbReference>
<dbReference type="NCBIfam" id="NF011652">
    <property type="entry name" value="PRK15070.1"/>
    <property type="match status" value="1"/>
</dbReference>
<dbReference type="PANTHER" id="PTHR39453">
    <property type="entry name" value="PHOSPHATE PROPANOYLTRANSFERASE"/>
    <property type="match status" value="1"/>
</dbReference>
<dbReference type="PANTHER" id="PTHR39453:SF1">
    <property type="entry name" value="PHOSPHATE PROPANOYLTRANSFERASE"/>
    <property type="match status" value="1"/>
</dbReference>
<dbReference type="Pfam" id="PF06130">
    <property type="entry name" value="PTAC"/>
    <property type="match status" value="1"/>
</dbReference>
<dbReference type="PIRSF" id="PIRSF010130">
    <property type="entry name" value="PduL"/>
    <property type="match status" value="1"/>
</dbReference>
<keyword id="KW-0012">Acyltransferase</keyword>
<keyword id="KW-1283">Bacterial microcompartment</keyword>
<keyword id="KW-0479">Metal-binding</keyword>
<keyword id="KW-1185">Reference proteome</keyword>
<keyword id="KW-0808">Transferase</keyword>
<keyword id="KW-0862">Zinc</keyword>
<gene>
    <name type="primary">pduL</name>
    <name type="ordered locus">Amet_0262</name>
</gene>
<comment type="function">
    <text evidence="2">Involved in 1,2-propanediol (1,2-PD) utilization within the bacterial microcompartment (BMC) dedicated to 1,2-PD degradation by catalyzing the conversion of propanoyl-CoA to propanoyl-phosphate.</text>
</comment>
<comment type="catalytic activity">
    <reaction evidence="2">
        <text>propanoyl-CoA + phosphate = propanoyl phosphate + CoA</text>
        <dbReference type="Rhea" id="RHEA:28046"/>
        <dbReference type="ChEBI" id="CHEBI:43474"/>
        <dbReference type="ChEBI" id="CHEBI:57287"/>
        <dbReference type="ChEBI" id="CHEBI:57392"/>
        <dbReference type="ChEBI" id="CHEBI:58933"/>
        <dbReference type="EC" id="2.3.1.222"/>
    </reaction>
</comment>
<comment type="cofactor">
    <cofactor evidence="1">
        <name>Zn(2+)</name>
        <dbReference type="ChEBI" id="CHEBI:29105"/>
    </cofactor>
    <text evidence="1">There are 2 Zn(2+) ions per monomer; Zn(2+) and CoA bind inbetween the 2 domains in each monomer.</text>
</comment>
<comment type="pathway">
    <text>Polyol metabolism; 1,2-propanediol degradation.</text>
</comment>
<comment type="subcellular location">
    <subcellularLocation>
        <location evidence="2">Bacterial microcompartment</location>
    </subcellularLocation>
</comment>
<comment type="domain">
    <text evidence="1">Formed by 2 beta-barrels, each is capped on both ends by short alpha-helices.</text>
</comment>
<comment type="similarity">
    <text evidence="3">Belongs to the PduL family.</text>
</comment>
<name>PDUL_ALKMQ</name>
<sequence length="212" mass="23482">MKEEQIKQIVEQVIKTFEEAQSVPMEVPVEVSARHIHLSKEHISLLFGSEDQLSIIKELSQPGQFQYDKRVTLIGPKGSIGNVAILGPSRDETQVEISYTDARALGIKPPLRESGDLQDTAGIIIATGHKAINLEGGVMIAKRHIHMTPKDAEVFHVKDGEHVKVRIESKRPIVLEDVLVRVNEKYGLSMHIDHDEGNAAAYQPGTTGKMIK</sequence>
<evidence type="ECO:0000250" key="1">
    <source>
        <dbReference type="UniProtKB" id="Q21A54"/>
    </source>
</evidence>
<evidence type="ECO:0000250" key="2">
    <source>
        <dbReference type="UniProtKB" id="Q9XDN5"/>
    </source>
</evidence>
<evidence type="ECO:0000305" key="3"/>
<feature type="chain" id="PRO_0000407712" description="Phosphate propanoyltransferase">
    <location>
        <begin position="1"/>
        <end position="212"/>
    </location>
</feature>
<feature type="binding site" evidence="1">
    <location>
        <begin position="31"/>
        <end position="33"/>
    </location>
    <ligand>
        <name>CoA</name>
        <dbReference type="ChEBI" id="CHEBI:57287"/>
    </ligand>
</feature>
<feature type="binding site" evidence="1">
    <location>
        <position position="35"/>
    </location>
    <ligand>
        <name>Zn(2+)</name>
        <dbReference type="ChEBI" id="CHEBI:29105"/>
        <label>1</label>
    </ligand>
</feature>
<feature type="binding site" evidence="1">
    <location>
        <position position="37"/>
    </location>
    <ligand>
        <name>Zn(2+)</name>
        <dbReference type="ChEBI" id="CHEBI:29105"/>
        <label>1</label>
    </ligand>
</feature>
<feature type="binding site" evidence="1">
    <location>
        <position position="77"/>
    </location>
    <ligand>
        <name>CoA</name>
        <dbReference type="ChEBI" id="CHEBI:57287"/>
    </ligand>
</feature>
<feature type="binding site" evidence="1">
    <location>
        <position position="90"/>
    </location>
    <ligand>
        <name>phosphate</name>
        <dbReference type="ChEBI" id="CHEBI:43474"/>
    </ligand>
</feature>
<feature type="binding site" evidence="1">
    <location>
        <position position="96"/>
    </location>
    <ligand>
        <name>Zn(2+)</name>
        <dbReference type="ChEBI" id="CHEBI:29105"/>
        <label>1</label>
    </ligand>
</feature>
<feature type="binding site" evidence="1">
    <location>
        <position position="144"/>
    </location>
    <ligand>
        <name>Zn(2+)</name>
        <dbReference type="ChEBI" id="CHEBI:29105"/>
        <label>2</label>
    </ligand>
</feature>
<feature type="binding site" evidence="1">
    <location>
        <position position="146"/>
    </location>
    <ligand>
        <name>Zn(2+)</name>
        <dbReference type="ChEBI" id="CHEBI:29105"/>
        <label>2</label>
    </ligand>
</feature>
<feature type="binding site" evidence="1">
    <location>
        <position position="191"/>
    </location>
    <ligand>
        <name>Zn(2+)</name>
        <dbReference type="ChEBI" id="CHEBI:29105"/>
        <label>2</label>
    </ligand>
</feature>
<feature type="binding site" evidence="1">
    <location>
        <position position="198"/>
    </location>
    <ligand>
        <name>CoA</name>
        <dbReference type="ChEBI" id="CHEBI:57287"/>
    </ligand>
</feature>
<reference key="1">
    <citation type="journal article" date="2016" name="Genome Announc.">
        <title>Complete genome sequence of Alkaliphilus metalliredigens strain QYMF, an alkaliphilic and metal-reducing bacterium isolated from borax-contaminated leachate ponds.</title>
        <authorList>
            <person name="Hwang C."/>
            <person name="Copeland A."/>
            <person name="Lucas S."/>
            <person name="Lapidus A."/>
            <person name="Barry K."/>
            <person name="Detter J.C."/>
            <person name="Glavina Del Rio T."/>
            <person name="Hammon N."/>
            <person name="Israni S."/>
            <person name="Dalin E."/>
            <person name="Tice H."/>
            <person name="Pitluck S."/>
            <person name="Chertkov O."/>
            <person name="Brettin T."/>
            <person name="Bruce D."/>
            <person name="Han C."/>
            <person name="Schmutz J."/>
            <person name="Larimer F."/>
            <person name="Land M.L."/>
            <person name="Hauser L."/>
            <person name="Kyrpides N."/>
            <person name="Mikhailova N."/>
            <person name="Ye Q."/>
            <person name="Zhou J."/>
            <person name="Richardson P."/>
            <person name="Fields M.W."/>
        </authorList>
    </citation>
    <scope>NUCLEOTIDE SEQUENCE [LARGE SCALE GENOMIC DNA]</scope>
    <source>
        <strain>QYMF</strain>
    </source>
</reference>